<reference key="1">
    <citation type="journal article" date="2003" name="Nucleic Acids Res.">
        <title>The complete genome sequence and analysis of Corynebacterium diphtheriae NCTC13129.</title>
        <authorList>
            <person name="Cerdeno-Tarraga A.-M."/>
            <person name="Efstratiou A."/>
            <person name="Dover L.G."/>
            <person name="Holden M.T.G."/>
            <person name="Pallen M.J."/>
            <person name="Bentley S.D."/>
            <person name="Besra G.S."/>
            <person name="Churcher C.M."/>
            <person name="James K.D."/>
            <person name="De Zoysa A."/>
            <person name="Chillingworth T."/>
            <person name="Cronin A."/>
            <person name="Dowd L."/>
            <person name="Feltwell T."/>
            <person name="Hamlin N."/>
            <person name="Holroyd S."/>
            <person name="Jagels K."/>
            <person name="Moule S."/>
            <person name="Quail M.A."/>
            <person name="Rabbinowitsch E."/>
            <person name="Rutherford K.M."/>
            <person name="Thomson N.R."/>
            <person name="Unwin L."/>
            <person name="Whitehead S."/>
            <person name="Barrell B.G."/>
            <person name="Parkhill J."/>
        </authorList>
    </citation>
    <scope>NUCLEOTIDE SEQUENCE [LARGE SCALE GENOMIC DNA]</scope>
    <source>
        <strain>ATCC 700971 / NCTC 13129 / Biotype gravis</strain>
    </source>
</reference>
<comment type="function">
    <text evidence="1">Catalyzes the conversion of glucosamine-6-phosphate to glucosamine-1-phosphate.</text>
</comment>
<comment type="catalytic activity">
    <reaction evidence="1">
        <text>alpha-D-glucosamine 1-phosphate = D-glucosamine 6-phosphate</text>
        <dbReference type="Rhea" id="RHEA:23424"/>
        <dbReference type="ChEBI" id="CHEBI:58516"/>
        <dbReference type="ChEBI" id="CHEBI:58725"/>
        <dbReference type="EC" id="5.4.2.10"/>
    </reaction>
</comment>
<comment type="cofactor">
    <cofactor evidence="1">
        <name>Mg(2+)</name>
        <dbReference type="ChEBI" id="CHEBI:18420"/>
    </cofactor>
    <text evidence="1">Binds 1 Mg(2+) ion per subunit.</text>
</comment>
<comment type="PTM">
    <text evidence="1">Activated by phosphorylation.</text>
</comment>
<comment type="similarity">
    <text evidence="1">Belongs to the phosphohexose mutase family.</text>
</comment>
<organism>
    <name type="scientific">Corynebacterium diphtheriae (strain ATCC 700971 / NCTC 13129 / Biotype gravis)</name>
    <dbReference type="NCBI Taxonomy" id="257309"/>
    <lineage>
        <taxon>Bacteria</taxon>
        <taxon>Bacillati</taxon>
        <taxon>Actinomycetota</taxon>
        <taxon>Actinomycetes</taxon>
        <taxon>Mycobacteriales</taxon>
        <taxon>Corynebacteriaceae</taxon>
        <taxon>Corynebacterium</taxon>
    </lineage>
</organism>
<proteinExistence type="inferred from homology"/>
<evidence type="ECO:0000255" key="1">
    <source>
        <dbReference type="HAMAP-Rule" id="MF_01554"/>
    </source>
</evidence>
<keyword id="KW-0413">Isomerase</keyword>
<keyword id="KW-0460">Magnesium</keyword>
<keyword id="KW-0479">Metal-binding</keyword>
<keyword id="KW-0597">Phosphoprotein</keyword>
<keyword id="KW-1185">Reference proteome</keyword>
<gene>
    <name evidence="1" type="primary">glmM</name>
    <name type="ordered locus">DIP0563</name>
</gene>
<dbReference type="EC" id="5.4.2.10" evidence="1"/>
<dbReference type="EMBL" id="BX248355">
    <property type="protein sequence ID" value="CAE49075.1"/>
    <property type="molecule type" value="Genomic_DNA"/>
</dbReference>
<dbReference type="RefSeq" id="WP_010934384.1">
    <property type="nucleotide sequence ID" value="NC_002935.2"/>
</dbReference>
<dbReference type="SMR" id="Q6NJ50"/>
<dbReference type="STRING" id="257309.DIP0563"/>
<dbReference type="KEGG" id="cdi:DIP0563"/>
<dbReference type="HOGENOM" id="CLU_016950_7_0_11"/>
<dbReference type="Proteomes" id="UP000002198">
    <property type="component" value="Chromosome"/>
</dbReference>
<dbReference type="GO" id="GO:0005829">
    <property type="term" value="C:cytosol"/>
    <property type="evidence" value="ECO:0007669"/>
    <property type="project" value="TreeGrafter"/>
</dbReference>
<dbReference type="GO" id="GO:0000287">
    <property type="term" value="F:magnesium ion binding"/>
    <property type="evidence" value="ECO:0007669"/>
    <property type="project" value="UniProtKB-UniRule"/>
</dbReference>
<dbReference type="GO" id="GO:0008966">
    <property type="term" value="F:phosphoglucosamine mutase activity"/>
    <property type="evidence" value="ECO:0007669"/>
    <property type="project" value="UniProtKB-UniRule"/>
</dbReference>
<dbReference type="GO" id="GO:0004615">
    <property type="term" value="F:phosphomannomutase activity"/>
    <property type="evidence" value="ECO:0007669"/>
    <property type="project" value="TreeGrafter"/>
</dbReference>
<dbReference type="GO" id="GO:0005975">
    <property type="term" value="P:carbohydrate metabolic process"/>
    <property type="evidence" value="ECO:0007669"/>
    <property type="project" value="InterPro"/>
</dbReference>
<dbReference type="GO" id="GO:0009252">
    <property type="term" value="P:peptidoglycan biosynthetic process"/>
    <property type="evidence" value="ECO:0007669"/>
    <property type="project" value="TreeGrafter"/>
</dbReference>
<dbReference type="GO" id="GO:0006048">
    <property type="term" value="P:UDP-N-acetylglucosamine biosynthetic process"/>
    <property type="evidence" value="ECO:0007669"/>
    <property type="project" value="TreeGrafter"/>
</dbReference>
<dbReference type="CDD" id="cd05802">
    <property type="entry name" value="GlmM"/>
    <property type="match status" value="1"/>
</dbReference>
<dbReference type="FunFam" id="3.30.310.50:FF:000001">
    <property type="entry name" value="Phosphoglucosamine mutase"/>
    <property type="match status" value="1"/>
</dbReference>
<dbReference type="FunFam" id="3.40.120.10:FF:000001">
    <property type="entry name" value="Phosphoglucosamine mutase"/>
    <property type="match status" value="1"/>
</dbReference>
<dbReference type="FunFam" id="3.40.120.10:FF:000002">
    <property type="entry name" value="Phosphoglucosamine mutase"/>
    <property type="match status" value="1"/>
</dbReference>
<dbReference type="Gene3D" id="3.40.120.10">
    <property type="entry name" value="Alpha-D-Glucose-1,6-Bisphosphate, subunit A, domain 3"/>
    <property type="match status" value="3"/>
</dbReference>
<dbReference type="Gene3D" id="3.30.310.50">
    <property type="entry name" value="Alpha-D-phosphohexomutase, C-terminal domain"/>
    <property type="match status" value="1"/>
</dbReference>
<dbReference type="HAMAP" id="MF_01554_B">
    <property type="entry name" value="GlmM_B"/>
    <property type="match status" value="1"/>
</dbReference>
<dbReference type="InterPro" id="IPR005844">
    <property type="entry name" value="A-D-PHexomutase_a/b/a-I"/>
</dbReference>
<dbReference type="InterPro" id="IPR016055">
    <property type="entry name" value="A-D-PHexomutase_a/b/a-I/II/III"/>
</dbReference>
<dbReference type="InterPro" id="IPR005845">
    <property type="entry name" value="A-D-PHexomutase_a/b/a-II"/>
</dbReference>
<dbReference type="InterPro" id="IPR005846">
    <property type="entry name" value="A-D-PHexomutase_a/b/a-III"/>
</dbReference>
<dbReference type="InterPro" id="IPR005843">
    <property type="entry name" value="A-D-PHexomutase_C"/>
</dbReference>
<dbReference type="InterPro" id="IPR036900">
    <property type="entry name" value="A-D-PHexomutase_C_sf"/>
</dbReference>
<dbReference type="InterPro" id="IPR016066">
    <property type="entry name" value="A-D-PHexomutase_CS"/>
</dbReference>
<dbReference type="InterPro" id="IPR005841">
    <property type="entry name" value="Alpha-D-phosphohexomutase_SF"/>
</dbReference>
<dbReference type="InterPro" id="IPR006352">
    <property type="entry name" value="GlmM_bact"/>
</dbReference>
<dbReference type="InterPro" id="IPR050060">
    <property type="entry name" value="Phosphoglucosamine_mutase"/>
</dbReference>
<dbReference type="NCBIfam" id="TIGR01455">
    <property type="entry name" value="glmM"/>
    <property type="match status" value="1"/>
</dbReference>
<dbReference type="PANTHER" id="PTHR42946:SF1">
    <property type="entry name" value="PHOSPHOGLUCOMUTASE (ALPHA-D-GLUCOSE-1,6-BISPHOSPHATE-DEPENDENT)"/>
    <property type="match status" value="1"/>
</dbReference>
<dbReference type="PANTHER" id="PTHR42946">
    <property type="entry name" value="PHOSPHOHEXOSE MUTASE"/>
    <property type="match status" value="1"/>
</dbReference>
<dbReference type="Pfam" id="PF02878">
    <property type="entry name" value="PGM_PMM_I"/>
    <property type="match status" value="1"/>
</dbReference>
<dbReference type="Pfam" id="PF02879">
    <property type="entry name" value="PGM_PMM_II"/>
    <property type="match status" value="1"/>
</dbReference>
<dbReference type="Pfam" id="PF02880">
    <property type="entry name" value="PGM_PMM_III"/>
    <property type="match status" value="1"/>
</dbReference>
<dbReference type="Pfam" id="PF00408">
    <property type="entry name" value="PGM_PMM_IV"/>
    <property type="match status" value="1"/>
</dbReference>
<dbReference type="PRINTS" id="PR00509">
    <property type="entry name" value="PGMPMM"/>
</dbReference>
<dbReference type="SUPFAM" id="SSF55957">
    <property type="entry name" value="Phosphoglucomutase, C-terminal domain"/>
    <property type="match status" value="1"/>
</dbReference>
<dbReference type="SUPFAM" id="SSF53738">
    <property type="entry name" value="Phosphoglucomutase, first 3 domains"/>
    <property type="match status" value="3"/>
</dbReference>
<dbReference type="PROSITE" id="PS00710">
    <property type="entry name" value="PGM_PMM"/>
    <property type="match status" value="1"/>
</dbReference>
<protein>
    <recommendedName>
        <fullName evidence="1">Phosphoglucosamine mutase</fullName>
        <ecNumber evidence="1">5.4.2.10</ecNumber>
    </recommendedName>
</protein>
<feature type="chain" id="PRO_0000147877" description="Phosphoglucosamine mutase">
    <location>
        <begin position="1"/>
        <end position="447"/>
    </location>
</feature>
<feature type="active site" description="Phosphoserine intermediate" evidence="1">
    <location>
        <position position="104"/>
    </location>
</feature>
<feature type="binding site" description="via phosphate group" evidence="1">
    <location>
        <position position="104"/>
    </location>
    <ligand>
        <name>Mg(2+)</name>
        <dbReference type="ChEBI" id="CHEBI:18420"/>
    </ligand>
</feature>
<feature type="binding site" evidence="1">
    <location>
        <position position="243"/>
    </location>
    <ligand>
        <name>Mg(2+)</name>
        <dbReference type="ChEBI" id="CHEBI:18420"/>
    </ligand>
</feature>
<feature type="binding site" evidence="1">
    <location>
        <position position="245"/>
    </location>
    <ligand>
        <name>Mg(2+)</name>
        <dbReference type="ChEBI" id="CHEBI:18420"/>
    </ligand>
</feature>
<feature type="binding site" evidence="1">
    <location>
        <position position="247"/>
    </location>
    <ligand>
        <name>Mg(2+)</name>
        <dbReference type="ChEBI" id="CHEBI:18420"/>
    </ligand>
</feature>
<feature type="modified residue" description="Phosphoserine" evidence="1">
    <location>
        <position position="104"/>
    </location>
</feature>
<name>GLMM_CORDI</name>
<sequence>MTRLFGTDGVRGLANRKLTALLALKLGAAAAEVLTKDNRSTSRRPVAVVGRDPRVSGEMLAAALSAGMASRGVDVLRVGVLPTPAVAYLTDFYGADMGVVISASHNPMPDNGIKFFSKGGHKLPDSVEDEIEKVMETIPDGGPTGHGIGRVIEEAVDAQETYLKHLKGAVPRSLEGITVVVDCANGAASEVAPLAYAAAGAKVIPIHNHPNAYNINDSCGSTHIDQVQAAVLEHGADLGLAHDGDADRCLAVDAEGNVVDGDQIMAILALAMKENGELHKSTLVATVMSNLGLRLAMKEAGIELRTTKVGDRYVLEELNAGGFSLGGEQSGHIVLPDHGTTGDGTLTGLSLMSRMAETGLSLKVLASAMTVLPQVLINVPVSDKTIIQTHPDVVAAMERASDELGEDGRVLLRPSGTEELFRVMVEAPSKETARRIAADLASVVAKI</sequence>
<accession>Q6NJ50</accession>